<evidence type="ECO:0000250" key="1"/>
<evidence type="ECO:0000255" key="2"/>
<evidence type="ECO:0000255" key="3">
    <source>
        <dbReference type="PROSITE-ProRule" id="PRU00140"/>
    </source>
</evidence>
<evidence type="ECO:0000256" key="4">
    <source>
        <dbReference type="SAM" id="MobiDB-lite"/>
    </source>
</evidence>
<evidence type="ECO:0000269" key="5">
    <source>
    </source>
</evidence>
<evidence type="ECO:0000305" key="6"/>
<sequence length="656" mass="69118">KVSDSAYSNSCSNSQSQRSGSSKSRLSGSHSSGSSGYGGKPSTQASSSDMIIKRNKDKSRKKKKNKGTGQGAGQAQTLISASTSLEGRDEEKPRPSGTGCVEQQICRELQDQQHGEDHSEPQATEQLQQEEEDQSGSESEADRVEGVAKSEAAQSFPIPSPLSVTIVPPSMGGCGGVGHAAGLDSGLAKFDKTWEAGPGKLESMTGVGAAAAGTGQRGERVKEDSFCCVISMHDGIVLYTTPSITDVLGYPRDMWLGRSFIDFVHLKDRATFASQITTGIPIAESRGSVPKDAKSTFCVMLRRYRGLKSGGFGVIGRPVSYEPFRLGLTFREAPEEARPDNYMVSNGTNMLLVICATPIKSSYKVPDEILSQKSPKFAIRHTATGIISHVDSAAVSALGYLPQDLIGRSIMDFYHHEDLSVMKETYETVMKKGQTAGASFCSKPYRFLIQNGCYVLLETEWTSFVNPWSRKLEFVVGHHRVFQGPKQCNVFEAAPTCKLKISEEAQSRNTRIKEDIVKRLAETVSRPSDTVKQEVSRRCQALASFMETLMDEVSRADLKSGSSGNFTTASNIHMSSVTNTSIAGTGGTGTGTGTGTGTGTGTGTGTGTGTGTGTGTGTGTGTGTGTGTGTGTGNGTNSGTGTGTTSSSRGGSTAIP</sequence>
<accession>Q03355</accession>
<accession>Q24626</accession>
<accession>Q24627</accession>
<accession>Q24628</accession>
<accession>Q26282</accession>
<accession>Q26284</accession>
<protein>
    <recommendedName>
        <fullName>Period circadian protein</fullName>
    </recommendedName>
</protein>
<proteinExistence type="inferred from homology"/>
<comment type="function">
    <text evidence="1">Essential for biological clock functions. Determines the period length of circadian and ultradian rhythms; an increase in PER dosage leads to shortened circadian rhythms and a decrease leads to lengthened circadian rhythms. Essential for the circadian rhythmicity of locomotor activity, eclosion behavior, and for the rhythmic component of the male courtship song that originates in the thoracic nervous system. The biological cycle depends on the rhythmic formation and nuclear localization of the TIM-PER complex. Light induces the degradation of TIM, which promotes elimination of PER. Nuclear activity of the heterodimer coordinatively regulates PER and TIM transcription through a negative feedback loop. Behaves as a negative element in circadian transcriptional loop. Does not appear to bind DNA, suggesting indirect transcriptional inhibition (By similarity).</text>
</comment>
<comment type="subunit">
    <text evidence="1">Forms a heterodimer with timeless (TIM); the complex then translocates into the nucleus.</text>
</comment>
<comment type="subcellular location">
    <subcellularLocation>
        <location evidence="1">Nucleus</location>
    </subcellularLocation>
    <subcellularLocation>
        <location evidence="1">Cytoplasm</location>
        <location evidence="1">Perinuclear region</location>
    </subcellularLocation>
    <text evidence="1">Nuclear at specific periods of the day. First accumulates in the perinuclear region about one hour before translocation into the nucleus. Interaction with Tim is required for nuclear localization (By similarity).</text>
</comment>
<comment type="domain">
    <text evidence="1">Contains a remarkable run of alternating Gly-Thr residues which is polymorphic in length. At least four types of Gly-Thr length exist in the natural population, (Gly-Thr)23 (shown here), (Gly-Thr)24, (Gly-Thr)25, and one minor variant (Gly-Thr)21. This Gly-Thr stretch is implicated in the maintenance of circadian period at different temperatures. Deletion of the repeat leads to a shortening of the courtship song cycle period, and thus could be important for determining features of species-specific mating behavior (By similarity).</text>
</comment>
<comment type="PTM">
    <text evidence="1">Phosphorylated with a circadian rhythmicity, probably by the double-time protein (dbt). Phosphorylation could be implicated in the stability of per monomer and in the formation of heterodimer per-tim (By similarity).</text>
</comment>
<comment type="miscellaneous">
    <text>The sequence shown here from 1-559 is that of strains SI-CA1, SI-CA2 and SI-K2. From 560-656 it is from strains Merano 4 and Australia.</text>
</comment>
<organism>
    <name type="scientific">Drosophila simulans</name>
    <name type="common">Fruit fly</name>
    <dbReference type="NCBI Taxonomy" id="7240"/>
    <lineage>
        <taxon>Eukaryota</taxon>
        <taxon>Metazoa</taxon>
        <taxon>Ecdysozoa</taxon>
        <taxon>Arthropoda</taxon>
        <taxon>Hexapoda</taxon>
        <taxon>Insecta</taxon>
        <taxon>Pterygota</taxon>
        <taxon>Neoptera</taxon>
        <taxon>Endopterygota</taxon>
        <taxon>Diptera</taxon>
        <taxon>Brachycera</taxon>
        <taxon>Muscomorpha</taxon>
        <taxon>Ephydroidea</taxon>
        <taxon>Drosophilidae</taxon>
        <taxon>Drosophila</taxon>
        <taxon>Sophophora</taxon>
    </lineage>
</organism>
<gene>
    <name type="primary">per</name>
</gene>
<keyword id="KW-0090">Biological rhythms</keyword>
<keyword id="KW-0963">Cytoplasm</keyword>
<keyword id="KW-0539">Nucleus</keyword>
<keyword id="KW-0597">Phosphoprotein</keyword>
<keyword id="KW-0677">Repeat</keyword>
<name>PER_DROSI</name>
<reference key="1">
    <citation type="journal article" date="1993" name="Genetics">
        <title>DNA sequence variation at the period locus within and among species of the Drosophila melanogaster complex.</title>
        <authorList>
            <person name="Kliman R.M."/>
            <person name="Hey J."/>
        </authorList>
    </citation>
    <scope>NUCLEOTIDE SEQUENCE [GENOMIC DNA] OF 1-559</scope>
    <source>
        <strain>SI-CA1</strain>
        <strain>SI-CA2</strain>
        <strain>SI-K1</strain>
        <strain>SI-K2</strain>
        <strain>SI-LI1</strain>
        <strain>SI-LI2</strain>
    </source>
</reference>
<reference key="2">
    <citation type="journal article" date="1994" name="Genetics">
        <title>Molecular polymorphism in the period gene of Drosophila simulans.</title>
        <authorList>
            <person name="Rosato E."/>
            <person name="Peixoto A.A."/>
            <person name="Barbujani G."/>
            <person name="Costa R."/>
            <person name="Kyriacou C.P."/>
        </authorList>
    </citation>
    <scope>NUCLEOTIDE SEQUENCE [GENOMIC DNA] OF 560-656</scope>
    <scope>POLYMORPHISM OF GLY-THR REPEATS</scope>
    <source>
        <strain>Merano 4</strain>
        <strain>Merano 7</strain>
        <strain>Merano 8</strain>
    </source>
</reference>
<reference key="3">
    <citation type="journal article" date="1992" name="J. Mol. Evol.">
        <title>Evolution of the threonine-glycine repeat region of the period gene in the melanogaster species subgroup of Drosophila.</title>
        <authorList>
            <person name="Peixoto A.A."/>
            <person name="Costa R."/>
            <person name="Wheeler D.A."/>
            <person name="Hall J.C."/>
            <person name="Kyriacou C.P."/>
        </authorList>
    </citation>
    <scope>NUCLEOTIDE SEQUENCE [GENOMIC DNA] OF 589-652</scope>
    <source>
        <strain>Australia</strain>
        <strain>Kenscoff</strain>
    </source>
</reference>
<feature type="chain" id="PRO_0000162609" description="Period circadian protein">
    <location>
        <begin position="1" status="less than"/>
        <end position="656" status="greater than"/>
    </location>
</feature>
<feature type="domain" description="PAS 1" evidence="3">
    <location>
        <begin position="224"/>
        <end position="359"/>
    </location>
</feature>
<feature type="domain" description="PAS 2" evidence="3">
    <location>
        <begin position="377"/>
        <end position="483"/>
    </location>
</feature>
<feature type="repeat" description="1" evidence="5">
    <location>
        <begin position="584"/>
        <end position="585"/>
    </location>
</feature>
<feature type="repeat" description="2" evidence="5">
    <location>
        <begin position="587"/>
        <end position="588"/>
    </location>
</feature>
<feature type="repeat" description="3" evidence="5">
    <location>
        <begin position="589"/>
        <end position="590"/>
    </location>
</feature>
<feature type="repeat" description="4" evidence="5">
    <location>
        <begin position="591"/>
        <end position="592"/>
    </location>
</feature>
<feature type="repeat" description="5" evidence="5">
    <location>
        <begin position="593"/>
        <end position="594"/>
    </location>
</feature>
<feature type="repeat" description="6" evidence="5">
    <location>
        <begin position="595"/>
        <end position="596"/>
    </location>
</feature>
<feature type="repeat" description="7" evidence="5">
    <location>
        <begin position="597"/>
        <end position="598"/>
    </location>
</feature>
<feature type="repeat" description="8" evidence="5">
    <location>
        <begin position="599"/>
        <end position="600"/>
    </location>
</feature>
<feature type="repeat" description="9" evidence="5">
    <location>
        <begin position="601"/>
        <end position="602"/>
    </location>
</feature>
<feature type="repeat" description="10" evidence="5">
    <location>
        <begin position="603"/>
        <end position="604"/>
    </location>
</feature>
<feature type="repeat" description="11" evidence="5">
    <location>
        <begin position="605"/>
        <end position="606"/>
    </location>
</feature>
<feature type="repeat" description="12" evidence="5">
    <location>
        <begin position="607"/>
        <end position="608"/>
    </location>
</feature>
<feature type="repeat" description="13" evidence="5">
    <location>
        <begin position="609"/>
        <end position="610"/>
    </location>
</feature>
<feature type="repeat" description="14" evidence="5">
    <location>
        <begin position="611"/>
        <end position="612"/>
    </location>
</feature>
<feature type="repeat" description="15" evidence="5">
    <location>
        <begin position="613"/>
        <end position="614"/>
    </location>
</feature>
<feature type="repeat" description="16" evidence="5">
    <location>
        <begin position="615"/>
        <end position="616"/>
    </location>
</feature>
<feature type="repeat" description="17" evidence="5">
    <location>
        <begin position="617"/>
        <end position="618"/>
    </location>
</feature>
<feature type="repeat" description="18" evidence="5">
    <location>
        <begin position="619"/>
        <end position="620"/>
    </location>
</feature>
<feature type="repeat" description="19" evidence="5">
    <location>
        <begin position="621"/>
        <end position="622"/>
    </location>
</feature>
<feature type="repeat" description="20" evidence="5">
    <location>
        <begin position="623"/>
        <end position="624"/>
    </location>
</feature>
<feature type="repeat" description="21" evidence="5">
    <location>
        <begin position="625"/>
        <end position="626"/>
    </location>
</feature>
<feature type="repeat" description="22" evidence="5">
    <location>
        <begin position="627"/>
        <end position="628"/>
    </location>
</feature>
<feature type="repeat" description="23" evidence="5">
    <location>
        <begin position="629"/>
        <end position="630"/>
    </location>
</feature>
<feature type="repeat" description="24" evidence="5">
    <location>
        <begin position="631"/>
        <end position="632"/>
    </location>
</feature>
<feature type="repeat" description="25" evidence="5">
    <location>
        <begin position="633"/>
        <end position="634"/>
    </location>
</feature>
<feature type="repeat" description="26" evidence="5">
    <location>
        <begin position="635"/>
        <end position="636"/>
    </location>
</feature>
<feature type="repeat" description="27; approximate" evidence="5">
    <location>
        <begin position="637"/>
        <end position="638"/>
    </location>
</feature>
<feature type="repeat" description="28" evidence="5">
    <location>
        <begin position="639"/>
        <end position="640"/>
    </location>
</feature>
<feature type="repeat" description="29" evidence="5">
    <location>
        <begin position="641"/>
        <end position="642"/>
    </location>
</feature>
<feature type="repeat" description="30" evidence="5">
    <location>
        <begin position="643"/>
        <end position="644"/>
    </location>
</feature>
<feature type="region of interest" description="Disordered" evidence="4">
    <location>
        <begin position="1"/>
        <end position="161"/>
    </location>
</feature>
<feature type="region of interest" description="Disordered" evidence="4">
    <location>
        <begin position="580"/>
        <end position="656"/>
    </location>
</feature>
<feature type="region of interest" description="30 X 2 AA approximate tandem repeats of G-[TN]">
    <location>
        <begin position="584"/>
        <end position="644"/>
    </location>
</feature>
<feature type="short sequence motif" description="Nuclear localization signal" evidence="2">
    <location>
        <begin position="53"/>
        <end position="66"/>
    </location>
</feature>
<feature type="compositionally biased region" description="Low complexity" evidence="4">
    <location>
        <begin position="1"/>
        <end position="34"/>
    </location>
</feature>
<feature type="compositionally biased region" description="Basic residues" evidence="4">
    <location>
        <begin position="53"/>
        <end position="66"/>
    </location>
</feature>
<feature type="compositionally biased region" description="Basic and acidic residues" evidence="4">
    <location>
        <begin position="108"/>
        <end position="120"/>
    </location>
</feature>
<feature type="compositionally biased region" description="Gly residues" evidence="4">
    <location>
        <begin position="584"/>
        <end position="642"/>
    </location>
</feature>
<feature type="compositionally biased region" description="Low complexity" evidence="4">
    <location>
        <begin position="643"/>
        <end position="656"/>
    </location>
</feature>
<feature type="sequence variant" description="In strain: SI-LI2.">
    <original>D</original>
    <variation>H</variation>
    <location>
        <position position="57"/>
    </location>
</feature>
<feature type="sequence variant" description="In strain: SI-K1, SI-K2, SI-LI1 and SI-LI2.">
    <original>T</original>
    <variation>A</variation>
    <location>
        <position position="68"/>
    </location>
</feature>
<feature type="sequence variant" description="In strain: SI-K1.">
    <original>T</original>
    <variation>A</variation>
    <location>
        <position position="77"/>
    </location>
</feature>
<feature type="sequence variant" description="In strain: SI-LI1 and SI-LI2.">
    <original>T</original>
    <variation>S</variation>
    <location>
        <position position="165"/>
    </location>
</feature>
<feature type="sequence variant" description="In strain: SI-LI1.">
    <original>I</original>
    <variation>M</variation>
    <location>
        <position position="230"/>
    </location>
</feature>
<feature type="sequence variant" description="In strain: SI-K2.">
    <original>G</original>
    <variation>A</variation>
    <location>
        <position position="311"/>
    </location>
</feature>
<feature type="sequence variant" description="In strain: Merano 7, Merano 8 and Kenscoff.">
    <original>N</original>
    <variation>T</variation>
    <location>
        <position position="634"/>
    </location>
</feature>
<feature type="sequence variant" description="In strain: Merano 8.">
    <original>TNS</original>
    <variation>N</variation>
    <location>
        <begin position="636"/>
        <end position="638"/>
    </location>
</feature>
<feature type="sequence variant" description="In strain: Merano 7 and Kenscoff.">
    <original>NS</original>
    <variation>GN</variation>
    <location>
        <begin position="637"/>
        <end position="638"/>
    </location>
</feature>
<feature type="sequence variant" description="In strain: Merano 7, Merano 8 and Kenscoff.">
    <original>GT</original>
    <variation>NS</variation>
    <location>
        <begin position="641"/>
        <end position="642"/>
    </location>
</feature>
<feature type="sequence variant" description="In strain: Merano 8 and Kenscoff.">
    <original>S</original>
    <variation>T</variation>
    <location>
        <position position="646"/>
    </location>
</feature>
<feature type="sequence variant" description="In strain: Merano 7 and Merano 8.">
    <original>T</original>
    <variation>A</variation>
    <location>
        <position position="653"/>
    </location>
</feature>
<feature type="sequence variant" description="In strain: Merano 7 and Merano 8.">
    <original>I</original>
    <variation>V</variation>
    <location>
        <position position="655"/>
    </location>
</feature>
<feature type="non-consecutive residues" evidence="6">
    <location>
        <begin position="559"/>
        <end position="560"/>
    </location>
</feature>
<feature type="non-terminal residue">
    <location>
        <position position="1"/>
    </location>
</feature>
<feature type="non-terminal residue">
    <location>
        <position position="656"/>
    </location>
</feature>
<dbReference type="EMBL" id="L07826">
    <property type="protein sequence ID" value="AAA28768.1"/>
    <property type="molecule type" value="Genomic_DNA"/>
</dbReference>
<dbReference type="EMBL" id="L07828">
    <property type="protein sequence ID" value="AAA28766.1"/>
    <property type="molecule type" value="Genomic_DNA"/>
</dbReference>
<dbReference type="EMBL" id="L07829">
    <property type="protein sequence ID" value="AAA28755.1"/>
    <property type="molecule type" value="Genomic_DNA"/>
</dbReference>
<dbReference type="EMBL" id="L07830">
    <property type="protein sequence ID" value="AAA28756.1"/>
    <property type="molecule type" value="Genomic_DNA"/>
</dbReference>
<dbReference type="EMBL" id="L07831">
    <property type="protein sequence ID" value="AAA28757.1"/>
    <property type="molecule type" value="Genomic_DNA"/>
</dbReference>
<dbReference type="EMBL" id="L07832">
    <property type="protein sequence ID" value="AAA28779.1"/>
    <property type="molecule type" value="Genomic_DNA"/>
</dbReference>
<dbReference type="EMBL" id="U11800">
    <property type="protein sequence ID" value="AAA77674.1"/>
    <property type="molecule type" value="Genomic_DNA"/>
</dbReference>
<dbReference type="EMBL" id="U11801">
    <property type="protein sequence ID" value="AAA77675.1"/>
    <property type="molecule type" value="Genomic_DNA"/>
</dbReference>
<dbReference type="EMBL" id="U11802">
    <property type="protein sequence ID" value="AAA77676.1"/>
    <property type="molecule type" value="Genomic_DNA"/>
</dbReference>
<dbReference type="EMBL" id="S53293">
    <property type="protein sequence ID" value="AAB25025.2"/>
    <property type="molecule type" value="Genomic_DNA"/>
</dbReference>
<dbReference type="EMBL" id="S53295">
    <property type="protein sequence ID" value="AAB25027.2"/>
    <property type="molecule type" value="Genomic_DNA"/>
</dbReference>
<dbReference type="PIR" id="S52950">
    <property type="entry name" value="S52950"/>
</dbReference>
<dbReference type="PIR" id="S52953">
    <property type="entry name" value="S52953"/>
</dbReference>
<dbReference type="PIR" id="S52954">
    <property type="entry name" value="S52954"/>
</dbReference>
<dbReference type="PIR" id="S52955">
    <property type="entry name" value="S52955"/>
</dbReference>
<dbReference type="PIR" id="S52956">
    <property type="entry name" value="S52956"/>
</dbReference>
<dbReference type="SMR" id="Q03355"/>
<dbReference type="EnsemblMetazoa" id="XM_039297286.2">
    <property type="protein sequence ID" value="XP_039153220.1"/>
    <property type="gene ID" value="LOC27206741"/>
</dbReference>
<dbReference type="FlyBase" id="FBgn0012888">
    <property type="gene designation" value="Dsim\per"/>
</dbReference>
<dbReference type="OrthoDB" id="7788983at2759"/>
<dbReference type="GO" id="GO:0005634">
    <property type="term" value="C:nucleus"/>
    <property type="evidence" value="ECO:0007669"/>
    <property type="project" value="UniProtKB-SubCell"/>
</dbReference>
<dbReference type="GO" id="GO:0048471">
    <property type="term" value="C:perinuclear region of cytoplasm"/>
    <property type="evidence" value="ECO:0007669"/>
    <property type="project" value="UniProtKB-SubCell"/>
</dbReference>
<dbReference type="GO" id="GO:0000976">
    <property type="term" value="F:transcription cis-regulatory region binding"/>
    <property type="evidence" value="ECO:0007669"/>
    <property type="project" value="TreeGrafter"/>
</dbReference>
<dbReference type="GO" id="GO:0001222">
    <property type="term" value="F:transcription corepressor binding"/>
    <property type="evidence" value="ECO:0007669"/>
    <property type="project" value="TreeGrafter"/>
</dbReference>
<dbReference type="GO" id="GO:0032922">
    <property type="term" value="P:circadian regulation of gene expression"/>
    <property type="evidence" value="ECO:0007669"/>
    <property type="project" value="TreeGrafter"/>
</dbReference>
<dbReference type="GO" id="GO:0043153">
    <property type="term" value="P:entrainment of circadian clock by photoperiod"/>
    <property type="evidence" value="ECO:0007669"/>
    <property type="project" value="TreeGrafter"/>
</dbReference>
<dbReference type="GO" id="GO:0000122">
    <property type="term" value="P:negative regulation of transcription by RNA polymerase II"/>
    <property type="evidence" value="ECO:0007669"/>
    <property type="project" value="TreeGrafter"/>
</dbReference>
<dbReference type="CDD" id="cd00130">
    <property type="entry name" value="PAS"/>
    <property type="match status" value="2"/>
</dbReference>
<dbReference type="FunFam" id="1.20.5.770:FF:000001">
    <property type="entry name" value="Period circadian protein"/>
    <property type="match status" value="1"/>
</dbReference>
<dbReference type="FunFam" id="3.30.450.20:FF:000066">
    <property type="entry name" value="Period circadian protein"/>
    <property type="match status" value="1"/>
</dbReference>
<dbReference type="FunFam" id="3.30.450.20:FF:000072">
    <property type="entry name" value="Period circadian protein"/>
    <property type="match status" value="1"/>
</dbReference>
<dbReference type="Gene3D" id="3.30.450.20">
    <property type="entry name" value="PAS domain"/>
    <property type="match status" value="2"/>
</dbReference>
<dbReference type="Gene3D" id="1.20.5.770">
    <property type="entry name" value="Single helix bin"/>
    <property type="match status" value="1"/>
</dbReference>
<dbReference type="InterPro" id="IPR000014">
    <property type="entry name" value="PAS"/>
</dbReference>
<dbReference type="InterPro" id="IPR035965">
    <property type="entry name" value="PAS-like_dom_sf"/>
</dbReference>
<dbReference type="InterPro" id="IPR013767">
    <property type="entry name" value="PAS_fold"/>
</dbReference>
<dbReference type="InterPro" id="IPR050760">
    <property type="entry name" value="Period_circadian_regulator"/>
</dbReference>
<dbReference type="PANTHER" id="PTHR11269">
    <property type="entry name" value="PERIOD CIRCADIAN PROTEIN"/>
    <property type="match status" value="1"/>
</dbReference>
<dbReference type="PANTHER" id="PTHR11269:SF16">
    <property type="entry name" value="PERIOD CIRCADIAN PROTEIN"/>
    <property type="match status" value="1"/>
</dbReference>
<dbReference type="Pfam" id="PF00989">
    <property type="entry name" value="PAS"/>
    <property type="match status" value="1"/>
</dbReference>
<dbReference type="Pfam" id="PF14598">
    <property type="entry name" value="PAS_11"/>
    <property type="match status" value="1"/>
</dbReference>
<dbReference type="SMART" id="SM00091">
    <property type="entry name" value="PAS"/>
    <property type="match status" value="2"/>
</dbReference>
<dbReference type="SUPFAM" id="SSF55785">
    <property type="entry name" value="PYP-like sensor domain (PAS domain)"/>
    <property type="match status" value="2"/>
</dbReference>
<dbReference type="PROSITE" id="PS50112">
    <property type="entry name" value="PAS"/>
    <property type="match status" value="2"/>
</dbReference>